<comment type="similarity">
    <text evidence="2">Belongs to the site-specific recombinase resolvase family.</text>
</comment>
<comment type="caution">
    <text evidence="2">Could be the product of a pseudogene.</text>
</comment>
<dbReference type="EMBL" id="U00096">
    <property type="status" value="NOT_ANNOTATED_CDS"/>
    <property type="molecule type" value="Genomic_DNA"/>
</dbReference>
<dbReference type="EMBL" id="AP009048">
    <property type="status" value="NOT_ANNOTATED_CDS"/>
    <property type="molecule type" value="Genomic_DNA"/>
</dbReference>
<dbReference type="SMR" id="P76611"/>
<dbReference type="FunCoup" id="P76611">
    <property type="interactions" value="5"/>
</dbReference>
<dbReference type="IntAct" id="P76611">
    <property type="interactions" value="3"/>
</dbReference>
<dbReference type="PATRIC" id="fig|83333.103.peg.3535"/>
<dbReference type="InParanoid" id="P76611"/>
<dbReference type="Proteomes" id="UP000000625">
    <property type="component" value="Chromosome"/>
</dbReference>
<dbReference type="GO" id="GO:0003677">
    <property type="term" value="F:DNA binding"/>
    <property type="evidence" value="ECO:0007669"/>
    <property type="project" value="UniProtKB-KW"/>
</dbReference>
<dbReference type="GO" id="GO:0000150">
    <property type="term" value="F:DNA strand exchange activity"/>
    <property type="evidence" value="ECO:0007669"/>
    <property type="project" value="UniProtKB-KW"/>
</dbReference>
<dbReference type="GO" id="GO:0015074">
    <property type="term" value="P:DNA integration"/>
    <property type="evidence" value="ECO:0007669"/>
    <property type="project" value="UniProtKB-KW"/>
</dbReference>
<dbReference type="InterPro" id="IPR006119">
    <property type="entry name" value="Resolv_N"/>
</dbReference>
<dbReference type="PROSITE" id="PS51736">
    <property type="entry name" value="RECOMBINASES_3"/>
    <property type="match status" value="1"/>
</dbReference>
<accession>P76611</accession>
<accession>P77521</accession>
<evidence type="ECO:0000255" key="1">
    <source>
        <dbReference type="PROSITE-ProRule" id="PRU01072"/>
    </source>
</evidence>
<evidence type="ECO:0000305" key="2"/>
<protein>
    <recommendedName>
        <fullName evidence="2">Putative protein PinH</fullName>
    </recommendedName>
    <alternativeName>
        <fullName>Putative DNA-invertase from prophage CP4-44</fullName>
    </alternativeName>
</protein>
<organism>
    <name type="scientific">Escherichia coli (strain K12)</name>
    <dbReference type="NCBI Taxonomy" id="83333"/>
    <lineage>
        <taxon>Bacteria</taxon>
        <taxon>Pseudomonadati</taxon>
        <taxon>Pseudomonadota</taxon>
        <taxon>Gammaproteobacteria</taxon>
        <taxon>Enterobacterales</taxon>
        <taxon>Enterobacteriaceae</taxon>
        <taxon>Escherichia</taxon>
    </lineage>
</organism>
<keyword id="KW-0229">DNA integration</keyword>
<keyword id="KW-0230">DNA invertase</keyword>
<keyword id="KW-0233">DNA recombination</keyword>
<keyword id="KW-0238">DNA-binding</keyword>
<keyword id="KW-1185">Reference proteome</keyword>
<name>PINH_ECOLI</name>
<sequence>MWHLVVLLEELCERGINFRALAQSIFAQQWGDECCKSKTICDLKVIV</sequence>
<reference key="1">
    <citation type="journal article" date="1997" name="DNA Res.">
        <title>Construction of a contiguous 874-kb sequence of the Escherichia coli-K12 genome corresponding to 50.0-68.8 min on the linkage map and analysis of its sequence features.</title>
        <authorList>
            <person name="Yamamoto Y."/>
            <person name="Aiba H."/>
            <person name="Baba T."/>
            <person name="Hayashi K."/>
            <person name="Inada T."/>
            <person name="Isono K."/>
            <person name="Itoh T."/>
            <person name="Kimura S."/>
            <person name="Kitagawa M."/>
            <person name="Makino K."/>
            <person name="Miki T."/>
            <person name="Mitsuhashi N."/>
            <person name="Mizobuchi K."/>
            <person name="Mori H."/>
            <person name="Nakade S."/>
            <person name="Nakamura Y."/>
            <person name="Nashimoto H."/>
            <person name="Oshima T."/>
            <person name="Oyama S."/>
            <person name="Saito N."/>
            <person name="Sampei G."/>
            <person name="Satoh Y."/>
            <person name="Sivasundaram S."/>
            <person name="Tagami H."/>
            <person name="Takahashi H."/>
            <person name="Takeda J."/>
            <person name="Takemoto K."/>
            <person name="Uehara K."/>
            <person name="Wada C."/>
            <person name="Yamagata S."/>
            <person name="Horiuchi T."/>
        </authorList>
    </citation>
    <scope>NUCLEOTIDE SEQUENCE [LARGE SCALE GENOMIC DNA]</scope>
    <source>
        <strain>K12 / W3110 / ATCC 27325 / DSM 5911</strain>
    </source>
</reference>
<reference key="2">
    <citation type="journal article" date="1997" name="Science">
        <title>The complete genome sequence of Escherichia coli K-12.</title>
        <authorList>
            <person name="Blattner F.R."/>
            <person name="Plunkett G. III"/>
            <person name="Bloch C.A."/>
            <person name="Perna N.T."/>
            <person name="Burland V."/>
            <person name="Riley M."/>
            <person name="Collado-Vides J."/>
            <person name="Glasner J.D."/>
            <person name="Rode C.K."/>
            <person name="Mayhew G.F."/>
            <person name="Gregor J."/>
            <person name="Davis N.W."/>
            <person name="Kirkpatrick H.A."/>
            <person name="Goeden M.A."/>
            <person name="Rose D.J."/>
            <person name="Mau B."/>
            <person name="Shao Y."/>
        </authorList>
    </citation>
    <scope>NUCLEOTIDE SEQUENCE [LARGE SCALE GENOMIC DNA]</scope>
    <source>
        <strain>K12 / MG1655 / ATCC 47076</strain>
    </source>
</reference>
<reference key="3">
    <citation type="journal article" date="2006" name="Mol. Syst. Biol.">
        <title>Highly accurate genome sequences of Escherichia coli K-12 strains MG1655 and W3110.</title>
        <authorList>
            <person name="Hayashi K."/>
            <person name="Morooka N."/>
            <person name="Yamamoto Y."/>
            <person name="Fujita K."/>
            <person name="Isono K."/>
            <person name="Choi S."/>
            <person name="Ohtsubo E."/>
            <person name="Baba T."/>
            <person name="Wanner B.L."/>
            <person name="Mori H."/>
            <person name="Horiuchi T."/>
        </authorList>
    </citation>
    <scope>NUCLEOTIDE SEQUENCE [LARGE SCALE GENOMIC DNA]</scope>
    <source>
        <strain>K12 / W3110 / ATCC 27325 / DSM 5911</strain>
    </source>
</reference>
<proteinExistence type="uncertain"/>
<feature type="chain" id="PRO_0000196361" description="Putative protein PinH">
    <location>
        <begin position="1"/>
        <end position="47"/>
    </location>
</feature>
<feature type="domain" description="Resolvase/invertase-type recombinase catalytic" evidence="1">
    <location>
        <begin position="1"/>
        <end position="47"/>
    </location>
</feature>
<gene>
    <name type="primary">pinH</name>
    <name type="ordered locus">b2648</name>
    <name type="ordered locus">JW5423</name>
</gene>